<name>ERN2_HUMAN</name>
<gene>
    <name evidence="12" type="primary">ERN2</name>
    <name evidence="1" type="synonym">IRE2</name>
</gene>
<comment type="function">
    <text evidence="7">Induces translational repression through 28S ribosomal RNA cleavage in response to ER stress. Pro-apoptotic. Appears to play no role in the unfolded-protein response, unlike closely related proteins.</text>
</comment>
<comment type="catalytic activity">
    <reaction evidence="7">
        <text>L-seryl-[protein] + ATP = O-phospho-L-seryl-[protein] + ADP + H(+)</text>
        <dbReference type="Rhea" id="RHEA:17989"/>
        <dbReference type="Rhea" id="RHEA-COMP:9863"/>
        <dbReference type="Rhea" id="RHEA-COMP:11604"/>
        <dbReference type="ChEBI" id="CHEBI:15378"/>
        <dbReference type="ChEBI" id="CHEBI:29999"/>
        <dbReference type="ChEBI" id="CHEBI:30616"/>
        <dbReference type="ChEBI" id="CHEBI:83421"/>
        <dbReference type="ChEBI" id="CHEBI:456216"/>
        <dbReference type="EC" id="2.7.11.1"/>
    </reaction>
</comment>
<comment type="catalytic activity">
    <reaction evidence="7">
        <text>L-threonyl-[protein] + ATP = O-phospho-L-threonyl-[protein] + ADP + H(+)</text>
        <dbReference type="Rhea" id="RHEA:46608"/>
        <dbReference type="Rhea" id="RHEA-COMP:11060"/>
        <dbReference type="Rhea" id="RHEA-COMP:11605"/>
        <dbReference type="ChEBI" id="CHEBI:15378"/>
        <dbReference type="ChEBI" id="CHEBI:30013"/>
        <dbReference type="ChEBI" id="CHEBI:30616"/>
        <dbReference type="ChEBI" id="CHEBI:61977"/>
        <dbReference type="ChEBI" id="CHEBI:456216"/>
        <dbReference type="EC" id="2.7.11.1"/>
    </reaction>
</comment>
<comment type="cofactor">
    <cofactor>
        <name>Mg(2+)</name>
        <dbReference type="ChEBI" id="CHEBI:18420"/>
    </cofactor>
</comment>
<comment type="activity regulation">
    <text evidence="1">The kinase domain is activated by trans-autophosphorylation. Kinase activity is required for activation of the endoribonuclease domain (By similarity).</text>
</comment>
<comment type="subcellular location">
    <subcellularLocation>
        <location evidence="7">Endoplasmic reticulum membrane</location>
        <topology evidence="7">Single-pass type I membrane protein</topology>
    </subcellularLocation>
</comment>
<comment type="PTM">
    <text evidence="7">Autophosphorylated.</text>
</comment>
<comment type="similarity">
    <text evidence="3">Belongs to the protein kinase superfamily. Ser/Thr protein kinase family.</text>
</comment>
<comment type="sequence caution" evidence="9">
    <conflict type="erroneous initiation">
        <sequence resource="EMBL-CDS" id="BAD18455"/>
    </conflict>
    <text>Extended N-terminus.</text>
</comment>
<dbReference type="EC" id="2.7.11.1"/>
<dbReference type="EC" id="3.1.26.-"/>
<dbReference type="EMBL" id="AB047079">
    <property type="protein sequence ID" value="BAB21297.1"/>
    <property type="molecule type" value="mRNA"/>
</dbReference>
<dbReference type="EMBL" id="AK131280">
    <property type="protein sequence ID" value="BAD18455.1"/>
    <property type="status" value="ALT_INIT"/>
    <property type="molecule type" value="mRNA"/>
</dbReference>
<dbReference type="EMBL" id="AC012317">
    <property type="status" value="NOT_ANNOTATED_CDS"/>
    <property type="molecule type" value="Genomic_DNA"/>
</dbReference>
<dbReference type="CCDS" id="CCDS32407.2"/>
<dbReference type="RefSeq" id="NP_001295149.2">
    <property type="nucleotide sequence ID" value="NM_001308220.1"/>
</dbReference>
<dbReference type="RefSeq" id="NP_150296.4">
    <property type="nucleotide sequence ID" value="NM_033266.3"/>
</dbReference>
<dbReference type="SMR" id="Q76MJ5"/>
<dbReference type="BioGRID" id="115843">
    <property type="interactions" value="24"/>
</dbReference>
<dbReference type="FunCoup" id="Q76MJ5">
    <property type="interactions" value="566"/>
</dbReference>
<dbReference type="IntAct" id="Q76MJ5">
    <property type="interactions" value="20"/>
</dbReference>
<dbReference type="STRING" id="9606.ENSP00000256797"/>
<dbReference type="BindingDB" id="Q76MJ5"/>
<dbReference type="ChEMBL" id="CHEMBL4105932"/>
<dbReference type="DrugCentral" id="Q76MJ5"/>
<dbReference type="GlyGen" id="Q76MJ5">
    <property type="glycosylation" value="1 site"/>
</dbReference>
<dbReference type="iPTMnet" id="Q76MJ5"/>
<dbReference type="PhosphoSitePlus" id="Q76MJ5"/>
<dbReference type="BioMuta" id="ERN2"/>
<dbReference type="DMDM" id="327478597"/>
<dbReference type="MassIVE" id="Q76MJ5"/>
<dbReference type="PaxDb" id="9606-ENSP00000256797"/>
<dbReference type="PeptideAtlas" id="Q76MJ5"/>
<dbReference type="ProteomicsDB" id="68688"/>
<dbReference type="Antibodypedia" id="12645">
    <property type="antibodies" value="212 antibodies from 31 providers"/>
</dbReference>
<dbReference type="DNASU" id="10595"/>
<dbReference type="Ensembl" id="ENST00000256797.9">
    <property type="protein sequence ID" value="ENSP00000256797.5"/>
    <property type="gene ID" value="ENSG00000134398.15"/>
</dbReference>
<dbReference type="GeneID" id="10595"/>
<dbReference type="KEGG" id="hsa:10595"/>
<dbReference type="MANE-Select" id="ENST00000256797.9">
    <property type="protein sequence ID" value="ENSP00000256797.5"/>
    <property type="RefSeq nucleotide sequence ID" value="NM_033266.4"/>
    <property type="RefSeq protein sequence ID" value="NP_150296.4"/>
</dbReference>
<dbReference type="UCSC" id="uc002dma.5">
    <property type="organism name" value="human"/>
</dbReference>
<dbReference type="AGR" id="HGNC:16942"/>
<dbReference type="CTD" id="10595"/>
<dbReference type="DisGeNET" id="10595"/>
<dbReference type="GeneCards" id="ERN2"/>
<dbReference type="HGNC" id="HGNC:16942">
    <property type="gene designation" value="ERN2"/>
</dbReference>
<dbReference type="HPA" id="ENSG00000134398">
    <property type="expression patterns" value="Group enriched (cervix, gallbladder, intestine, salivary gland, stomach)"/>
</dbReference>
<dbReference type="MIM" id="604034">
    <property type="type" value="gene"/>
</dbReference>
<dbReference type="neXtProt" id="NX_Q76MJ5"/>
<dbReference type="OpenTargets" id="ENSG00000134398"/>
<dbReference type="PharmGKB" id="PA134889542"/>
<dbReference type="VEuPathDB" id="HostDB:ENSG00000134398"/>
<dbReference type="eggNOG" id="KOG1027">
    <property type="taxonomic scope" value="Eukaryota"/>
</dbReference>
<dbReference type="GeneTree" id="ENSGT00940000160812"/>
<dbReference type="InParanoid" id="Q76MJ5"/>
<dbReference type="OMA" id="TSLHNQW"/>
<dbReference type="OrthoDB" id="63989at2759"/>
<dbReference type="PAN-GO" id="Q76MJ5">
    <property type="GO annotations" value="6 GO annotations based on evolutionary models"/>
</dbReference>
<dbReference type="PhylomeDB" id="Q76MJ5"/>
<dbReference type="TreeFam" id="TF313986"/>
<dbReference type="PathwayCommons" id="Q76MJ5"/>
<dbReference type="SignaLink" id="Q76MJ5"/>
<dbReference type="BioGRID-ORCS" id="10595">
    <property type="hits" value="6 hits in 1150 CRISPR screens"/>
</dbReference>
<dbReference type="ChiTaRS" id="ERN2">
    <property type="organism name" value="human"/>
</dbReference>
<dbReference type="GenomeRNAi" id="10595"/>
<dbReference type="Pharos" id="Q76MJ5">
    <property type="development level" value="Tchem"/>
</dbReference>
<dbReference type="PRO" id="PR:Q76MJ5"/>
<dbReference type="Proteomes" id="UP000005640">
    <property type="component" value="Chromosome 16"/>
</dbReference>
<dbReference type="RNAct" id="Q76MJ5">
    <property type="molecule type" value="protein"/>
</dbReference>
<dbReference type="Bgee" id="ENSG00000134398">
    <property type="expression patterns" value="Expressed in nasal cavity epithelium and 185 other cell types or tissues"/>
</dbReference>
<dbReference type="ExpressionAtlas" id="Q76MJ5">
    <property type="expression patterns" value="baseline and differential"/>
</dbReference>
<dbReference type="GO" id="GO:0005829">
    <property type="term" value="C:cytosol"/>
    <property type="evidence" value="ECO:0000314"/>
    <property type="project" value="HPA"/>
</dbReference>
<dbReference type="GO" id="GO:0005783">
    <property type="term" value="C:endoplasmic reticulum"/>
    <property type="evidence" value="ECO:0000314"/>
    <property type="project" value="HPA"/>
</dbReference>
<dbReference type="GO" id="GO:0044322">
    <property type="term" value="C:endoplasmic reticulum quality control compartment"/>
    <property type="evidence" value="ECO:0007669"/>
    <property type="project" value="Ensembl"/>
</dbReference>
<dbReference type="GO" id="GO:1990604">
    <property type="term" value="C:IRE1-TRAF2-ASK1 complex"/>
    <property type="evidence" value="ECO:0000250"/>
    <property type="project" value="ParkinsonsUK-UCL"/>
</dbReference>
<dbReference type="GO" id="GO:0005524">
    <property type="term" value="F:ATP binding"/>
    <property type="evidence" value="ECO:0000314"/>
    <property type="project" value="UniProtKB"/>
</dbReference>
<dbReference type="GO" id="GO:0004519">
    <property type="term" value="F:endonuclease activity"/>
    <property type="evidence" value="ECO:0000314"/>
    <property type="project" value="UniProtKB"/>
</dbReference>
<dbReference type="GO" id="GO:0000287">
    <property type="term" value="F:magnesium ion binding"/>
    <property type="evidence" value="ECO:0000314"/>
    <property type="project" value="UniProtKB"/>
</dbReference>
<dbReference type="GO" id="GO:0106310">
    <property type="term" value="F:protein serine kinase activity"/>
    <property type="evidence" value="ECO:0007669"/>
    <property type="project" value="RHEA"/>
</dbReference>
<dbReference type="GO" id="GO:0004674">
    <property type="term" value="F:protein serine/threonine kinase activity"/>
    <property type="evidence" value="ECO:0000314"/>
    <property type="project" value="UniProtKB"/>
</dbReference>
<dbReference type="GO" id="GO:0004521">
    <property type="term" value="F:RNA endonuclease activity"/>
    <property type="evidence" value="ECO:0000318"/>
    <property type="project" value="GO_Central"/>
</dbReference>
<dbReference type="GO" id="GO:0051082">
    <property type="term" value="F:unfolded protein binding"/>
    <property type="evidence" value="ECO:0000318"/>
    <property type="project" value="GO_Central"/>
</dbReference>
<dbReference type="GO" id="GO:0030263">
    <property type="term" value="P:apoptotic chromosome condensation"/>
    <property type="evidence" value="ECO:0000315"/>
    <property type="project" value="UniProtKB"/>
</dbReference>
<dbReference type="GO" id="GO:0070059">
    <property type="term" value="P:intrinsic apoptotic signaling pathway in response to endoplasmic reticulum stress"/>
    <property type="evidence" value="ECO:0000318"/>
    <property type="project" value="GO_Central"/>
</dbReference>
<dbReference type="GO" id="GO:0036498">
    <property type="term" value="P:IRE1-mediated unfolded protein response"/>
    <property type="evidence" value="ECO:0000318"/>
    <property type="project" value="GO_Central"/>
</dbReference>
<dbReference type="GO" id="GO:0006397">
    <property type="term" value="P:mRNA processing"/>
    <property type="evidence" value="ECO:0007669"/>
    <property type="project" value="InterPro"/>
</dbReference>
<dbReference type="GO" id="GO:0045892">
    <property type="term" value="P:negative regulation of DNA-templated transcription"/>
    <property type="evidence" value="ECO:0000315"/>
    <property type="project" value="UniProtKB"/>
</dbReference>
<dbReference type="GO" id="GO:0006468">
    <property type="term" value="P:protein phosphorylation"/>
    <property type="evidence" value="ECO:0000314"/>
    <property type="project" value="UniProtKB"/>
</dbReference>
<dbReference type="GO" id="GO:0034976">
    <property type="term" value="P:response to endoplasmic reticulum stress"/>
    <property type="evidence" value="ECO:0000304"/>
    <property type="project" value="ParkinsonsUK-UCL"/>
</dbReference>
<dbReference type="GO" id="GO:0016075">
    <property type="term" value="P:rRNA catabolic process"/>
    <property type="evidence" value="ECO:0000314"/>
    <property type="project" value="UniProtKB"/>
</dbReference>
<dbReference type="CDD" id="cd09769">
    <property type="entry name" value="Luminal_IRE1"/>
    <property type="match status" value="1"/>
</dbReference>
<dbReference type="CDD" id="cd10422">
    <property type="entry name" value="RNase_Ire1"/>
    <property type="match status" value="1"/>
</dbReference>
<dbReference type="CDD" id="cd13982">
    <property type="entry name" value="STKc_IRE1"/>
    <property type="match status" value="1"/>
</dbReference>
<dbReference type="FunFam" id="2.130.10.10:FF:000417">
    <property type="entry name" value="Endoplasmic reticulum to nucleus signaling 2"/>
    <property type="match status" value="1"/>
</dbReference>
<dbReference type="FunFam" id="3.30.200.20:FF:000077">
    <property type="entry name" value="Putative Serine/threonine-protein kinase/endoribonuclease IRE1"/>
    <property type="match status" value="1"/>
</dbReference>
<dbReference type="FunFam" id="1.20.1440.180:FF:000001">
    <property type="entry name" value="Serine/threonine-protein kinase/endoribonuclease IRE1"/>
    <property type="match status" value="1"/>
</dbReference>
<dbReference type="FunFam" id="1.10.510.10:FF:000215">
    <property type="entry name" value="serine/threonine-protein kinase/endoribonuclease IRE1 isoform X1"/>
    <property type="match status" value="1"/>
</dbReference>
<dbReference type="Gene3D" id="1.20.1440.180">
    <property type="entry name" value="KEN domain"/>
    <property type="match status" value="1"/>
</dbReference>
<dbReference type="Gene3D" id="3.30.200.20">
    <property type="entry name" value="Phosphorylase Kinase, domain 1"/>
    <property type="match status" value="1"/>
</dbReference>
<dbReference type="Gene3D" id="1.10.510.10">
    <property type="entry name" value="Transferase(Phosphotransferase) domain 1"/>
    <property type="match status" value="1"/>
</dbReference>
<dbReference type="Gene3D" id="2.130.10.10">
    <property type="entry name" value="YVTN repeat-like/Quinoprotein amine dehydrogenase"/>
    <property type="match status" value="1"/>
</dbReference>
<dbReference type="InterPro" id="IPR045133">
    <property type="entry name" value="IRE1/2-like"/>
</dbReference>
<dbReference type="InterPro" id="IPR010513">
    <property type="entry name" value="KEN_dom"/>
</dbReference>
<dbReference type="InterPro" id="IPR038357">
    <property type="entry name" value="KEN_sf"/>
</dbReference>
<dbReference type="InterPro" id="IPR011009">
    <property type="entry name" value="Kinase-like_dom_sf"/>
</dbReference>
<dbReference type="InterPro" id="IPR018391">
    <property type="entry name" value="PQQ_b-propeller_rpt"/>
</dbReference>
<dbReference type="InterPro" id="IPR000719">
    <property type="entry name" value="Prot_kinase_dom"/>
</dbReference>
<dbReference type="InterPro" id="IPR011047">
    <property type="entry name" value="Quinoprotein_ADH-like_sf"/>
</dbReference>
<dbReference type="InterPro" id="IPR008271">
    <property type="entry name" value="Ser/Thr_kinase_AS"/>
</dbReference>
<dbReference type="InterPro" id="IPR015943">
    <property type="entry name" value="WD40/YVTN_repeat-like_dom_sf"/>
</dbReference>
<dbReference type="PANTHER" id="PTHR13954">
    <property type="entry name" value="IRE1-RELATED"/>
    <property type="match status" value="1"/>
</dbReference>
<dbReference type="PANTHER" id="PTHR13954:SF15">
    <property type="entry name" value="SERINE_THREONINE-PROTEIN KINASE_ENDORIBONUCLEASE IRE2"/>
    <property type="match status" value="1"/>
</dbReference>
<dbReference type="Pfam" id="PF00069">
    <property type="entry name" value="Pkinase"/>
    <property type="match status" value="1"/>
</dbReference>
<dbReference type="Pfam" id="PF06479">
    <property type="entry name" value="Ribonuc_2-5A"/>
    <property type="match status" value="1"/>
</dbReference>
<dbReference type="SMART" id="SM00564">
    <property type="entry name" value="PQQ"/>
    <property type="match status" value="4"/>
</dbReference>
<dbReference type="SMART" id="SM00580">
    <property type="entry name" value="PUG"/>
    <property type="match status" value="1"/>
</dbReference>
<dbReference type="SMART" id="SM00220">
    <property type="entry name" value="S_TKc"/>
    <property type="match status" value="1"/>
</dbReference>
<dbReference type="SUPFAM" id="SSF56112">
    <property type="entry name" value="Protein kinase-like (PK-like)"/>
    <property type="match status" value="1"/>
</dbReference>
<dbReference type="SUPFAM" id="SSF50998">
    <property type="entry name" value="Quinoprotein alcohol dehydrogenase-like"/>
    <property type="match status" value="1"/>
</dbReference>
<dbReference type="PROSITE" id="PS51392">
    <property type="entry name" value="KEN"/>
    <property type="match status" value="1"/>
</dbReference>
<dbReference type="PROSITE" id="PS50011">
    <property type="entry name" value="PROTEIN_KINASE_DOM"/>
    <property type="match status" value="1"/>
</dbReference>
<dbReference type="PROSITE" id="PS00108">
    <property type="entry name" value="PROTEIN_KINASE_ST"/>
    <property type="match status" value="1"/>
</dbReference>
<accession>Q76MJ5</accession>
<accession>Q6ZNC0</accession>
<reference evidence="9 10" key="1">
    <citation type="journal article" date="2001" name="Nat. Cell Biol.">
        <title>Translational control by the ER transmembrane kinase/ribonuclease IRE1 under ER stress.</title>
        <authorList>
            <person name="Iwawaki T."/>
            <person name="Hosoda A."/>
            <person name="Okuda T."/>
            <person name="Kamigori Y."/>
            <person name="Nomura-Furuwatari C."/>
            <person name="Kimata Y."/>
            <person name="Tsuru A."/>
            <person name="Kohno K."/>
        </authorList>
    </citation>
    <scope>NUCLEOTIDE SEQUENCE [MRNA]</scope>
    <scope>FUNCTION</scope>
    <scope>SUBCELLULAR LOCATION</scope>
    <scope>GLYCOSYLATION</scope>
    <scope>AUTOPHOSPHORYLATION</scope>
    <scope>MUTAGENESIS OF LYS-548</scope>
    <scope>VARIANTS GLN-271 AND THR-487</scope>
    <source>
        <tissue evidence="10">Fetal lung fibroblast</tissue>
    </source>
</reference>
<reference evidence="11" key="2">
    <citation type="journal article" date="2004" name="Nat. Genet.">
        <title>Complete sequencing and characterization of 21,243 full-length human cDNAs.</title>
        <authorList>
            <person name="Ota T."/>
            <person name="Suzuki Y."/>
            <person name="Nishikawa T."/>
            <person name="Otsuki T."/>
            <person name="Sugiyama T."/>
            <person name="Irie R."/>
            <person name="Wakamatsu A."/>
            <person name="Hayashi K."/>
            <person name="Sato H."/>
            <person name="Nagai K."/>
            <person name="Kimura K."/>
            <person name="Makita H."/>
            <person name="Sekine M."/>
            <person name="Obayashi M."/>
            <person name="Nishi T."/>
            <person name="Shibahara T."/>
            <person name="Tanaka T."/>
            <person name="Ishii S."/>
            <person name="Yamamoto J."/>
            <person name="Saito K."/>
            <person name="Kawai Y."/>
            <person name="Isono Y."/>
            <person name="Nakamura Y."/>
            <person name="Nagahari K."/>
            <person name="Murakami K."/>
            <person name="Yasuda T."/>
            <person name="Iwayanagi T."/>
            <person name="Wagatsuma M."/>
            <person name="Shiratori A."/>
            <person name="Sudo H."/>
            <person name="Hosoiri T."/>
            <person name="Kaku Y."/>
            <person name="Kodaira H."/>
            <person name="Kondo H."/>
            <person name="Sugawara M."/>
            <person name="Takahashi M."/>
            <person name="Kanda K."/>
            <person name="Yokoi T."/>
            <person name="Furuya T."/>
            <person name="Kikkawa E."/>
            <person name="Omura Y."/>
            <person name="Abe K."/>
            <person name="Kamihara K."/>
            <person name="Katsuta N."/>
            <person name="Sato K."/>
            <person name="Tanikawa M."/>
            <person name="Yamazaki M."/>
            <person name="Ninomiya K."/>
            <person name="Ishibashi T."/>
            <person name="Yamashita H."/>
            <person name="Murakawa K."/>
            <person name="Fujimori K."/>
            <person name="Tanai H."/>
            <person name="Kimata M."/>
            <person name="Watanabe M."/>
            <person name="Hiraoka S."/>
            <person name="Chiba Y."/>
            <person name="Ishida S."/>
            <person name="Ono Y."/>
            <person name="Takiguchi S."/>
            <person name="Watanabe S."/>
            <person name="Yosida M."/>
            <person name="Hotuta T."/>
            <person name="Kusano J."/>
            <person name="Kanehori K."/>
            <person name="Takahashi-Fujii A."/>
            <person name="Hara H."/>
            <person name="Tanase T.-O."/>
            <person name="Nomura Y."/>
            <person name="Togiya S."/>
            <person name="Komai F."/>
            <person name="Hara R."/>
            <person name="Takeuchi K."/>
            <person name="Arita M."/>
            <person name="Imose N."/>
            <person name="Musashino K."/>
            <person name="Yuuki H."/>
            <person name="Oshima A."/>
            <person name="Sasaki N."/>
            <person name="Aotsuka S."/>
            <person name="Yoshikawa Y."/>
            <person name="Matsunawa H."/>
            <person name="Ichihara T."/>
            <person name="Shiohata N."/>
            <person name="Sano S."/>
            <person name="Moriya S."/>
            <person name="Momiyama H."/>
            <person name="Satoh N."/>
            <person name="Takami S."/>
            <person name="Terashima Y."/>
            <person name="Suzuki O."/>
            <person name="Nakagawa S."/>
            <person name="Senoh A."/>
            <person name="Mizoguchi H."/>
            <person name="Goto Y."/>
            <person name="Shimizu F."/>
            <person name="Wakebe H."/>
            <person name="Hishigaki H."/>
            <person name="Watanabe T."/>
            <person name="Sugiyama A."/>
            <person name="Takemoto M."/>
            <person name="Kawakami B."/>
            <person name="Yamazaki M."/>
            <person name="Watanabe K."/>
            <person name="Kumagai A."/>
            <person name="Itakura S."/>
            <person name="Fukuzumi Y."/>
            <person name="Fujimori Y."/>
            <person name="Komiyama M."/>
            <person name="Tashiro H."/>
            <person name="Tanigami A."/>
            <person name="Fujiwara T."/>
            <person name="Ono T."/>
            <person name="Yamada K."/>
            <person name="Fujii Y."/>
            <person name="Ozaki K."/>
            <person name="Hirao M."/>
            <person name="Ohmori Y."/>
            <person name="Kawabata A."/>
            <person name="Hikiji T."/>
            <person name="Kobatake N."/>
            <person name="Inagaki H."/>
            <person name="Ikema Y."/>
            <person name="Okamoto S."/>
            <person name="Okitani R."/>
            <person name="Kawakami T."/>
            <person name="Noguchi S."/>
            <person name="Itoh T."/>
            <person name="Shigeta K."/>
            <person name="Senba T."/>
            <person name="Matsumura K."/>
            <person name="Nakajima Y."/>
            <person name="Mizuno T."/>
            <person name="Morinaga M."/>
            <person name="Sasaki M."/>
            <person name="Togashi T."/>
            <person name="Oyama M."/>
            <person name="Hata H."/>
            <person name="Watanabe M."/>
            <person name="Komatsu T."/>
            <person name="Mizushima-Sugano J."/>
            <person name="Satoh T."/>
            <person name="Shirai Y."/>
            <person name="Takahashi Y."/>
            <person name="Nakagawa K."/>
            <person name="Okumura K."/>
            <person name="Nagase T."/>
            <person name="Nomura N."/>
            <person name="Kikuchi H."/>
            <person name="Masuho Y."/>
            <person name="Yamashita R."/>
            <person name="Nakai K."/>
            <person name="Yada T."/>
            <person name="Nakamura Y."/>
            <person name="Ohara O."/>
            <person name="Isogai T."/>
            <person name="Sugano S."/>
        </authorList>
    </citation>
    <scope>NUCLEOTIDE SEQUENCE [LARGE SCALE MRNA]</scope>
    <source>
        <tissue evidence="11">Fetal brain</tissue>
    </source>
</reference>
<reference key="3">
    <citation type="journal article" date="2004" name="Nature">
        <title>The sequence and analysis of duplication-rich human chromosome 16.</title>
        <authorList>
            <person name="Martin J."/>
            <person name="Han C."/>
            <person name="Gordon L.A."/>
            <person name="Terry A."/>
            <person name="Prabhakar S."/>
            <person name="She X."/>
            <person name="Xie G."/>
            <person name="Hellsten U."/>
            <person name="Chan Y.M."/>
            <person name="Altherr M."/>
            <person name="Couronne O."/>
            <person name="Aerts A."/>
            <person name="Bajorek E."/>
            <person name="Black S."/>
            <person name="Blumer H."/>
            <person name="Branscomb E."/>
            <person name="Brown N.C."/>
            <person name="Bruno W.J."/>
            <person name="Buckingham J.M."/>
            <person name="Callen D.F."/>
            <person name="Campbell C.S."/>
            <person name="Campbell M.L."/>
            <person name="Campbell E.W."/>
            <person name="Caoile C."/>
            <person name="Challacombe J.F."/>
            <person name="Chasteen L.A."/>
            <person name="Chertkov O."/>
            <person name="Chi H.C."/>
            <person name="Christensen M."/>
            <person name="Clark L.M."/>
            <person name="Cohn J.D."/>
            <person name="Denys M."/>
            <person name="Detter J.C."/>
            <person name="Dickson M."/>
            <person name="Dimitrijevic-Bussod M."/>
            <person name="Escobar J."/>
            <person name="Fawcett J.J."/>
            <person name="Flowers D."/>
            <person name="Fotopulos D."/>
            <person name="Glavina T."/>
            <person name="Gomez M."/>
            <person name="Gonzales E."/>
            <person name="Goodstein D."/>
            <person name="Goodwin L.A."/>
            <person name="Grady D.L."/>
            <person name="Grigoriev I."/>
            <person name="Groza M."/>
            <person name="Hammon N."/>
            <person name="Hawkins T."/>
            <person name="Haydu L."/>
            <person name="Hildebrand C.E."/>
            <person name="Huang W."/>
            <person name="Israni S."/>
            <person name="Jett J."/>
            <person name="Jewett P.B."/>
            <person name="Kadner K."/>
            <person name="Kimball H."/>
            <person name="Kobayashi A."/>
            <person name="Krawczyk M.-C."/>
            <person name="Leyba T."/>
            <person name="Longmire J.L."/>
            <person name="Lopez F."/>
            <person name="Lou Y."/>
            <person name="Lowry S."/>
            <person name="Ludeman T."/>
            <person name="Manohar C.F."/>
            <person name="Mark G.A."/>
            <person name="McMurray K.L."/>
            <person name="Meincke L.J."/>
            <person name="Morgan J."/>
            <person name="Moyzis R.K."/>
            <person name="Mundt M.O."/>
            <person name="Munk A.C."/>
            <person name="Nandkeshwar R.D."/>
            <person name="Pitluck S."/>
            <person name="Pollard M."/>
            <person name="Predki P."/>
            <person name="Parson-Quintana B."/>
            <person name="Ramirez L."/>
            <person name="Rash S."/>
            <person name="Retterer J."/>
            <person name="Ricke D.O."/>
            <person name="Robinson D.L."/>
            <person name="Rodriguez A."/>
            <person name="Salamov A."/>
            <person name="Saunders E.H."/>
            <person name="Scott D."/>
            <person name="Shough T."/>
            <person name="Stallings R.L."/>
            <person name="Stalvey M."/>
            <person name="Sutherland R.D."/>
            <person name="Tapia R."/>
            <person name="Tesmer J.G."/>
            <person name="Thayer N."/>
            <person name="Thompson L.S."/>
            <person name="Tice H."/>
            <person name="Torney D.C."/>
            <person name="Tran-Gyamfi M."/>
            <person name="Tsai M."/>
            <person name="Ulanovsky L.E."/>
            <person name="Ustaszewska A."/>
            <person name="Vo N."/>
            <person name="White P.S."/>
            <person name="Williams A.L."/>
            <person name="Wills P.L."/>
            <person name="Wu J.-R."/>
            <person name="Wu K."/>
            <person name="Yang J."/>
            <person name="DeJong P."/>
            <person name="Bruce D."/>
            <person name="Doggett N.A."/>
            <person name="Deaven L."/>
            <person name="Schmutz J."/>
            <person name="Grimwood J."/>
            <person name="Richardson P."/>
            <person name="Rokhsar D.S."/>
            <person name="Eichler E.E."/>
            <person name="Gilna P."/>
            <person name="Lucas S.M."/>
            <person name="Myers R.M."/>
            <person name="Rubin E.M."/>
            <person name="Pennacchio L.A."/>
        </authorList>
    </citation>
    <scope>NUCLEOTIDE SEQUENCE [LARGE SCALE GENOMIC DNA]</scope>
</reference>
<reference key="4">
    <citation type="journal article" date="2007" name="Nature">
        <title>Patterns of somatic mutation in human cancer genomes.</title>
        <authorList>
            <person name="Greenman C."/>
            <person name="Stephens P."/>
            <person name="Smith R."/>
            <person name="Dalgliesh G.L."/>
            <person name="Hunter C."/>
            <person name="Bignell G."/>
            <person name="Davies H."/>
            <person name="Teague J."/>
            <person name="Butler A."/>
            <person name="Stevens C."/>
            <person name="Edkins S."/>
            <person name="O'Meara S."/>
            <person name="Vastrik I."/>
            <person name="Schmidt E.E."/>
            <person name="Avis T."/>
            <person name="Barthorpe S."/>
            <person name="Bhamra G."/>
            <person name="Buck G."/>
            <person name="Choudhury B."/>
            <person name="Clements J."/>
            <person name="Cole J."/>
            <person name="Dicks E."/>
            <person name="Forbes S."/>
            <person name="Gray K."/>
            <person name="Halliday K."/>
            <person name="Harrison R."/>
            <person name="Hills K."/>
            <person name="Hinton J."/>
            <person name="Jenkinson A."/>
            <person name="Jones D."/>
            <person name="Menzies A."/>
            <person name="Mironenko T."/>
            <person name="Perry J."/>
            <person name="Raine K."/>
            <person name="Richardson D."/>
            <person name="Shepherd R."/>
            <person name="Small A."/>
            <person name="Tofts C."/>
            <person name="Varian J."/>
            <person name="Webb T."/>
            <person name="West S."/>
            <person name="Widaa S."/>
            <person name="Yates A."/>
            <person name="Cahill D.P."/>
            <person name="Louis D.N."/>
            <person name="Goldstraw P."/>
            <person name="Nicholson A.G."/>
            <person name="Brasseur F."/>
            <person name="Looijenga L."/>
            <person name="Weber B.L."/>
            <person name="Chiew Y.-E."/>
            <person name="DeFazio A."/>
            <person name="Greaves M.F."/>
            <person name="Green A.R."/>
            <person name="Campbell P."/>
            <person name="Birney E."/>
            <person name="Easton D.F."/>
            <person name="Chenevix-Trench G."/>
            <person name="Tan M.-H."/>
            <person name="Khoo S.K."/>
            <person name="Teh B.T."/>
            <person name="Yuen S.T."/>
            <person name="Leung S.Y."/>
            <person name="Wooster R."/>
            <person name="Futreal P.A."/>
            <person name="Stratton M.R."/>
        </authorList>
    </citation>
    <scope>VARIANTS [LARGE SCALE ANALYSIS] ILE-69; CYS-118; CYS-184; GLN-271; THR-318; PHE-410; THR-487; PHE-504; GLN-537 AND TYR-858</scope>
</reference>
<organism>
    <name type="scientific">Homo sapiens</name>
    <name type="common">Human</name>
    <dbReference type="NCBI Taxonomy" id="9606"/>
    <lineage>
        <taxon>Eukaryota</taxon>
        <taxon>Metazoa</taxon>
        <taxon>Chordata</taxon>
        <taxon>Craniata</taxon>
        <taxon>Vertebrata</taxon>
        <taxon>Euteleostomi</taxon>
        <taxon>Mammalia</taxon>
        <taxon>Eutheria</taxon>
        <taxon>Euarchontoglires</taxon>
        <taxon>Primates</taxon>
        <taxon>Haplorrhini</taxon>
        <taxon>Catarrhini</taxon>
        <taxon>Hominidae</taxon>
        <taxon>Homo</taxon>
    </lineage>
</organism>
<proteinExistence type="evidence at protein level"/>
<protein>
    <recommendedName>
        <fullName>Serine/threonine-protein kinase/endoribonuclease IRE2</fullName>
    </recommendedName>
    <alternativeName>
        <fullName>Endoplasmic reticulum-to-nucleus signaling 2</fullName>
    </alternativeName>
    <alternativeName>
        <fullName>Inositol-requiring protein 2</fullName>
        <shortName>hIRE2p</shortName>
    </alternativeName>
    <alternativeName>
        <fullName>Ire1-beta</fullName>
        <shortName>IRE1b</shortName>
    </alternativeName>
    <domain>
        <recommendedName>
            <fullName>Serine/threonine-protein kinase</fullName>
            <ecNumber>2.7.11.1</ecNumber>
        </recommendedName>
    </domain>
    <domain>
        <recommendedName>
            <fullName>Endoribonuclease</fullName>
            <ecNumber>3.1.26.-</ecNumber>
        </recommendedName>
    </domain>
</protein>
<sequence length="926" mass="102480">MASAVRGSRPWPRLGLQLQFAALLLGTLSPQVHTLRPENLLLVSTLDGSLHALSKQTGDLKWTLRDDPVIEGPMYVTEMAFLSDPADGSLYILGTQKQQGLMKLPFTIPELVHASPCRSSDGVFYTGRKQDAWFVVDPESGETQMTLTTEGPSTPRLYIGRTQYTVTMHDPRAPALRWNTTYRRYSAPPMDGSPGKYMSHLASCGMGLLLTVDPGSGTVLWTQDLGVPVMGVYTWHQDGLRQLPHLTLARDTLHFLALRWGHIRLPASGPRDTATLFSTLDTQLLMTLYVGKDETGFYVSKALVHTGVALVPRGLTLAPADGPTTDEVTLQVSGEREGSPSTAVRYPSGSVALPSQWLLIGHHELPPVLHTTMLRVHPTLGSGTAETRPPENTQAPAFFLELLSLSREKLWDSELHPEEKTPDSYLGLGPQDLLAASLTAVLLGGWILFVMRQQQPQVVEKQQETPLAPADFAHISQDAQSLHSGASRRSQKRLQSPSKQAQPLDDPEAEQLTVVGKISFNPKDVLGRGAGGTFVFRGQFEGRAVAVKRLLRECFGLVRREVQLLQESDRHPNVLRYFCTERGPQFHYIALELCRASLQEYVENPDLDRGGLEPEVVLQQLMSGLAHLHSLHIVHRDLKPGNILITGPDSQGLGRVVLSDFGLCKKLPAGRCSFSLHSGIPGTEGWMAPELLQLLPPDSPTSAVDIFSAGCVFYYVLSGGSHPFGDSLYRQANILTGAPCLAHLEEEVHDKVVARDLVGAMLSPLPQPRPSAPQVLAHPFFWSRAKQLQFFQDVSDWLEKESEQEPLVRALEAGGCAVVRDNWHEHISMPLQTDLRKFRSYKGTSVRDLLRAVRNKKHHYRELPVEVRQALGQVPDGFVQYFTNRFPRLLLHTHRAMRSCASESLFLPYYPPDSEARRPCPGATGR</sequence>
<evidence type="ECO:0000250" key="1">
    <source>
        <dbReference type="UniProtKB" id="O75460"/>
    </source>
</evidence>
<evidence type="ECO:0000255" key="2"/>
<evidence type="ECO:0000255" key="3">
    <source>
        <dbReference type="PROSITE-ProRule" id="PRU00159"/>
    </source>
</evidence>
<evidence type="ECO:0000255" key="4">
    <source>
        <dbReference type="PROSITE-ProRule" id="PRU00725"/>
    </source>
</evidence>
<evidence type="ECO:0000255" key="5">
    <source>
        <dbReference type="PROSITE-ProRule" id="PRU10027"/>
    </source>
</evidence>
<evidence type="ECO:0000256" key="6">
    <source>
        <dbReference type="SAM" id="MobiDB-lite"/>
    </source>
</evidence>
<evidence type="ECO:0000269" key="7">
    <source>
    </source>
</evidence>
<evidence type="ECO:0000269" key="8">
    <source>
    </source>
</evidence>
<evidence type="ECO:0000305" key="9"/>
<evidence type="ECO:0000312" key="10">
    <source>
        <dbReference type="EMBL" id="BAB21297.1"/>
    </source>
</evidence>
<evidence type="ECO:0000312" key="11">
    <source>
        <dbReference type="EMBL" id="BAD18455.1"/>
    </source>
</evidence>
<evidence type="ECO:0000312" key="12">
    <source>
        <dbReference type="HGNC" id="HGNC:16942"/>
    </source>
</evidence>
<keyword id="KW-0053">Apoptosis</keyword>
<keyword id="KW-0067">ATP-binding</keyword>
<keyword id="KW-0256">Endoplasmic reticulum</keyword>
<keyword id="KW-0378">Hydrolase</keyword>
<keyword id="KW-0418">Kinase</keyword>
<keyword id="KW-0460">Magnesium</keyword>
<keyword id="KW-0472">Membrane</keyword>
<keyword id="KW-0479">Metal-binding</keyword>
<keyword id="KW-0511">Multifunctional enzyme</keyword>
<keyword id="KW-0547">Nucleotide-binding</keyword>
<keyword id="KW-0597">Phosphoprotein</keyword>
<keyword id="KW-1267">Proteomics identification</keyword>
<keyword id="KW-1185">Reference proteome</keyword>
<keyword id="KW-0723">Serine/threonine-protein kinase</keyword>
<keyword id="KW-0732">Signal</keyword>
<keyword id="KW-0804">Transcription</keyword>
<keyword id="KW-0805">Transcription regulation</keyword>
<keyword id="KW-0808">Transferase</keyword>
<keyword id="KW-0812">Transmembrane</keyword>
<keyword id="KW-1133">Transmembrane helix</keyword>
<feature type="signal peptide" evidence="2">
    <location>
        <begin position="1"/>
        <end position="34"/>
    </location>
</feature>
<feature type="chain" id="PRO_0000024329" description="Serine/threonine-protein kinase/endoribonuclease IRE2">
    <location>
        <begin position="35"/>
        <end position="926"/>
    </location>
</feature>
<feature type="topological domain" description="Lumenal" evidence="2">
    <location>
        <begin position="35"/>
        <end position="430"/>
    </location>
</feature>
<feature type="transmembrane region" description="Helical" evidence="2">
    <location>
        <begin position="431"/>
        <end position="451"/>
    </location>
</feature>
<feature type="topological domain" description="Cytoplasmic" evidence="2">
    <location>
        <begin position="452"/>
        <end position="926"/>
    </location>
</feature>
<feature type="domain" description="Protein kinase" evidence="3">
    <location>
        <begin position="520"/>
        <end position="781"/>
    </location>
</feature>
<feature type="domain" description="KEN" evidence="4">
    <location>
        <begin position="784"/>
        <end position="912"/>
    </location>
</feature>
<feature type="region of interest" description="Disordered" evidence="6">
    <location>
        <begin position="478"/>
        <end position="509"/>
    </location>
</feature>
<feature type="compositionally biased region" description="Polar residues" evidence="6">
    <location>
        <begin position="478"/>
        <end position="501"/>
    </location>
</feature>
<feature type="active site" description="Proton acceptor" evidence="3 5">
    <location>
        <position position="637"/>
    </location>
</feature>
<feature type="binding site" evidence="3">
    <location>
        <begin position="526"/>
        <end position="534"/>
    </location>
    <ligand>
        <name>ATP</name>
        <dbReference type="ChEBI" id="CHEBI:30616"/>
    </ligand>
</feature>
<feature type="binding site">
    <location>
        <position position="548"/>
    </location>
    <ligand>
        <name>ATP</name>
        <dbReference type="ChEBI" id="CHEBI:30616"/>
    </ligand>
</feature>
<feature type="sequence variant" id="VAR_040495" description="In dbSNP:rs9932495." evidence="8">
    <original>V</original>
    <variation>I</variation>
    <location>
        <position position="69"/>
    </location>
</feature>
<feature type="sequence variant" id="VAR_040496" description="In dbSNP:rs56117885." evidence="8">
    <original>R</original>
    <variation>C</variation>
    <location>
        <position position="118"/>
    </location>
</feature>
<feature type="sequence variant" id="VAR_040497" description="In dbSNP:rs34683474." evidence="8">
    <original>R</original>
    <variation>C</variation>
    <location>
        <position position="184"/>
    </location>
</feature>
<feature type="sequence variant" id="VAR_040498" description="In dbSNP:rs55772851." evidence="7 8">
    <original>R</original>
    <variation>Q</variation>
    <location>
        <position position="271"/>
    </location>
</feature>
<feature type="sequence variant" id="VAR_040499" description="In dbSNP:rs56191901." evidence="8">
    <original>A</original>
    <variation>T</variation>
    <location>
        <position position="318"/>
    </location>
</feature>
<feature type="sequence variant" id="VAR_040500" description="In dbSNP:rs55687638." evidence="8">
    <original>L</original>
    <variation>F</variation>
    <location>
        <position position="410"/>
    </location>
</feature>
<feature type="sequence variant" id="VAR_040501" description="In dbSNP:rs26764." evidence="7 8">
    <original>S</original>
    <variation>T</variation>
    <location>
        <position position="487"/>
    </location>
</feature>
<feature type="sequence variant" id="VAR_040502" description="In dbSNP:rs56001432." evidence="8">
    <original>L</original>
    <variation>F</variation>
    <location>
        <position position="504"/>
    </location>
</feature>
<feature type="sequence variant" id="VAR_040503" description="In dbSNP:rs56176960." evidence="8">
    <original>R</original>
    <variation>Q</variation>
    <location>
        <position position="537"/>
    </location>
</feature>
<feature type="sequence variant" id="VAR_040504" description="In dbSNP:rs56137182." evidence="8">
    <original>H</original>
    <variation>Y</variation>
    <location>
        <position position="858"/>
    </location>
</feature>
<feature type="mutagenesis site" description="Loss of autophosphorylation, of induction of apoptosis and of 28S rRNA cleavage, attenuation of repression of protein synthesis." evidence="7">
    <original>K</original>
    <variation>A</variation>
    <location>
        <position position="548"/>
    </location>
</feature>
<feature type="sequence conflict" description="In Ref. 1; BAB21297." evidence="9" ref="1">
    <original>Q</original>
    <variation>L</variation>
    <location>
        <position position="99"/>
    </location>
</feature>
<feature type="sequence conflict" description="In Ref. 1; BAB21297." evidence="9" ref="1">
    <original>E</original>
    <variation>A</variation>
    <location>
        <position position="150"/>
    </location>
</feature>
<feature type="sequence conflict" description="In Ref. 1; BAB21297." evidence="9" ref="1">
    <original>G</original>
    <variation>E</variation>
    <location>
        <position position="215"/>
    </location>
</feature>
<feature type="sequence conflict" description="In Ref. 1; BAB21297." evidence="9" ref="1">
    <original>T</original>
    <variation>A</variation>
    <location>
        <position position="218"/>
    </location>
</feature>
<feature type="sequence conflict" description="In Ref. 1; BAB21297." evidence="9" ref="1">
    <original>V</original>
    <variation>M</variation>
    <location>
        <position position="227"/>
    </location>
</feature>
<feature type="sequence conflict" description="In Ref. 1; BAB21297." evidence="9" ref="1">
    <original>T</original>
    <variation>A</variation>
    <location>
        <position position="279"/>
    </location>
</feature>
<feature type="sequence conflict" description="In Ref. 1; BAB21297." evidence="9" ref="1">
    <original>A</original>
    <variation>T</variation>
    <location>
        <position position="320"/>
    </location>
</feature>
<feature type="sequence conflict" description="In Ref. 1; BAB21297." evidence="9" ref="1">
    <original>L</original>
    <variation>P</variation>
    <location>
        <position position="380"/>
    </location>
</feature>
<feature type="sequence conflict" description="In Ref. 1; BAB21297." evidence="9" ref="1">
    <original>T</original>
    <variation>I</variation>
    <location>
        <position position="421"/>
    </location>
</feature>
<feature type="sequence conflict" description="In Ref. 1; BAB21297." evidence="9" ref="1">
    <location>
        <position position="453"/>
    </location>
</feature>
<feature type="sequence conflict" description="In Ref. 1; BAB21297." evidence="9" ref="1">
    <original>A</original>
    <variation>V</variation>
    <location>
        <position position="468"/>
    </location>
</feature>
<feature type="sequence conflict" description="In Ref. 1; BAB21297." evidence="9" ref="1">
    <original>FAH</original>
    <variation>TAD</variation>
    <location>
        <begin position="472"/>
        <end position="474"/>
    </location>
</feature>
<feature type="sequence conflict" description="In Ref. 1; BAB21297." evidence="9" ref="1">
    <original>A</original>
    <variation>V</variation>
    <location>
        <position position="486"/>
    </location>
</feature>
<feature type="sequence conflict" description="In Ref. 1; BAB21297." evidence="9" ref="1">
    <original>RRSQ</original>
    <variation>LRSK</variation>
    <location>
        <begin position="488"/>
        <end position="491"/>
    </location>
</feature>
<feature type="sequence conflict" description="In Ref. 1; BAB21297." evidence="9" ref="1">
    <original>R</original>
    <variation>H</variation>
    <location>
        <position position="528"/>
    </location>
</feature>
<feature type="sequence conflict" description="In Ref. 1; BAB21297." evidence="9" ref="1">
    <original>S</original>
    <variation>T</variation>
    <location>
        <position position="650"/>
    </location>
</feature>
<feature type="sequence conflict" description="In Ref. 1; BAB21297." evidence="9" ref="1">
    <original>D</original>
    <variation>N</variation>
    <location>
        <position position="698"/>
    </location>
</feature>
<feature type="sequence conflict" description="In Ref. 1; BAB21297." evidence="9" ref="1">
    <original>A</original>
    <variation>V</variation>
    <location>
        <position position="738"/>
    </location>
</feature>
<feature type="sequence conflict" description="In Ref. 1; BAB21297." evidence="9" ref="1">
    <original>G</original>
    <variation>A</variation>
    <location>
        <position position="759"/>
    </location>
</feature>
<feature type="sequence conflict" description="In Ref. 1; BAB21297." evidence="9" ref="1">
    <original>P</original>
    <variation>L</variation>
    <location>
        <position position="764"/>
    </location>
</feature>
<feature type="sequence conflict" description="In Ref. 1; BAB21297." evidence="9" ref="1">
    <original>P</original>
    <variation>A</variation>
    <location>
        <position position="768"/>
    </location>
</feature>
<feature type="sequence conflict" description="In Ref. 1; BAB21297." evidence="9" ref="1">
    <original>V</original>
    <variation>M</variation>
    <location>
        <position position="808"/>
    </location>
</feature>
<feature type="sequence conflict" description="In Ref. 1; BAB21297." evidence="9" ref="1">
    <original>A</original>
    <variation>T</variation>
    <location>
        <position position="817"/>
    </location>
</feature>
<feature type="sequence conflict" description="In Ref. 1; BAB21297." evidence="9" ref="1">
    <original>T</original>
    <variation>I</variation>
    <location>
        <position position="833"/>
    </location>
</feature>
<feature type="sequence conflict" description="In Ref. 1; BAB21297." evidence="9" ref="1">
    <original>R</original>
    <variation>Q</variation>
    <location>
        <position position="888"/>
    </location>
</feature>
<feature type="sequence conflict" description="In Ref. 1; BAB21297." evidence="9" ref="1">
    <original>A</original>
    <variation>V</variation>
    <location>
        <position position="896"/>
    </location>
</feature>
<feature type="sequence conflict" description="In Ref. 1; BAB21297." evidence="9" ref="1">
    <original>R</original>
    <variation>G</variation>
    <location>
        <position position="918"/>
    </location>
</feature>
<feature type="sequence conflict" description="In Ref. 1; BAB21297." evidence="9" ref="1">
    <original>T</original>
    <variation>A</variation>
    <location>
        <position position="924"/>
    </location>
</feature>